<comment type="function">
    <text evidence="1">Protects the bacterial cell from host peptidases.</text>
</comment>
<comment type="subcellular location">
    <subcellularLocation>
        <location evidence="2">Cell membrane</location>
        <topology evidence="2">Lipid-anchor</topology>
    </subcellularLocation>
</comment>
<comment type="similarity">
    <text evidence="3">Belongs to the protease inhibitor I39 (alpha-2-macroglobulin) family. Bacterial alpha-2-macroglobulin subfamily.</text>
</comment>
<feature type="signal peptide" evidence="2">
    <location>
        <begin position="1"/>
        <end position="31"/>
    </location>
</feature>
<feature type="chain" id="PRO_0000036247" description="Alpha-2-macroglobulin" evidence="2">
    <location>
        <begin position="32"/>
        <end position="1641"/>
    </location>
</feature>
<feature type="lipid moiety-binding region" description="N-palmitoyl cysteine" evidence="2">
    <location>
        <position position="32"/>
    </location>
</feature>
<feature type="lipid moiety-binding region" description="S-diacylglycerol cysteine" evidence="2">
    <location>
        <position position="32"/>
    </location>
</feature>
<feature type="cross-link" description="Isoglutamyl cysteine thioester (Cys-Gln)" evidence="1">
    <location>
        <begin position="1166"/>
        <end position="1169"/>
    </location>
</feature>
<keyword id="KW-1003">Cell membrane</keyword>
<keyword id="KW-0449">Lipoprotein</keyword>
<keyword id="KW-0472">Membrane</keyword>
<keyword id="KW-0564">Palmitate</keyword>
<keyword id="KW-0646">Protease inhibitor</keyword>
<keyword id="KW-1185">Reference proteome</keyword>
<keyword id="KW-0732">Signal</keyword>
<keyword id="KW-0882">Thioester bond</keyword>
<accession>Q87E11</accession>
<sequence length="1641" mass="179071">MRDRVAMMLRPLVRGWIPRAVLLLTVAFSFGCNRNHNGQLPQSSGEPVAVAKEPVKGFVLVRAYPDQHDGELALALEFSQPLAATQEFDTLVRLEQGSGNHDGGWSLSDDAKTLRYPYVEADKHYTVLISGDLLAATGSRLGKSRKEPVYTGELDPVVGFASRGSILPARGSRGVPVVSVNVPEVDVEFMRVREKALPAFLARYHKAGQRSSWELSNQGNSRKRLSELADPVYVTRFVLDGKKNERALTYLPIQNIRELREPGLYFAVMKPTGSFSDAFETAFFSVSNIGLHARAYKDKLFVHTASLRSGNPYKQVDLLVLDAKGETVLQGATDDNGNALLNYTLNAGHVLVSRNGRDISILPFNQPALDLSEFAVAGRENPWFDVFAWSGRDLYRPGEMLRISALLRDRDGKPVKPQPVFLRLKQPDGKTFRETRLQPAEQGYLEFTQKIPSDAPTGRWRVEFRTDPASKEAVQGLAVRVEEFLPERMKLELSSAQPVLRAKAPFTLTADAAYLYGAPAAGNRFTANLAVAVEQHPLDNMPGWFFGDATLQLPRGAKETIDITLGADGHLVHDIVLPEEAKPVSPMAVVVSGSVYESGGRPVTRSLKRVLWPADALVGVRPLFDVASGADANGMARFELTRVGVDGKPQSAKGLKATLVRELRDYHWRYSDGRWDYDFTRRFENKETRTVDISSSHTTTLSLPVEWGDYWLEVFDPVTGLTMRYPFRAGWSWGDDNRGLDARPDKVKLALDKTSYRAGDTLKVTITPPHPGKGLLLVESDKPLYVQAIDANPSTTLEIPVTADWERHDVYVTALVFRGGSASNNTTPARAVGEAYVPMQRKERRVAVGLVVPKQVRPAQSLPVTVSVPELAGKQAHVTISAVDAGILNITGFPVPDAAAHFFAQRRLSVDAYDIYGRVIESFEGGTGRLKFGGDMALPPLPQAKRPTARSQTVDLFSGAVKLDAKGNAHIQLPVPDFNGALRVSALVYSDTRYGQRDAETVVRAPILAEASMPRVMAPGDRSTVTVDVQNFTGKQGKFAVKVEGVGPLVVAEAGRSVTLGIDGKTTLNFPLRALEGNSVAQVRVRVEGNGSKAERHYDLPVRAVWPQGLRTQAHVLNVLAPIAFDPALAKGLMPDSVNARLSVSTLAPIPFASVLQGVFEYPYGCAEQTASKGYAALWLDDATIRSLGIQGVTPAQRLERLEGALGRLASLQTTNGHFSMWGGNSDVNPVLTPYIAGFLLDAKDAGFAVSDAVLQKALNRLSEDLLSGAHLFYGNDQSEALMFAHQAWSGYVLARVNRAPLGTLRTLYDNERGKAVSGLSLVHLGVALSLQGDRKRGEAAIEAGFAKSEGGRPEVFGDYGSVIRDNALMIALVRAHGLAKPAYEARVMALGRDLQARRRSGWLWLSTQEQVALAQLGRALLVDQKKQVSGTLYVGKQREDIAASRLIGRSFDAAALARGVRFVPQGDVPLYASFEVAGIPRQAPVSDDSQLLVVRRWYTVDGKPWTPGPLKEGQALIVRVSVTSKQNMPDALLTDLLPAGLEIENFNLGETRQWADVTVDGIALSERADAADIKHEEFRDDRYVAMLQLTGGRTANLFYLVRAVTPGSYNVPPSLVEDMYRPALRGTGRVAPAMVTVVQP</sequence>
<reference key="1">
    <citation type="journal article" date="2003" name="J. Bacteriol.">
        <title>Comparative analyses of the complete genome sequences of Pierce's disease and citrus variegated chlorosis strains of Xylella fastidiosa.</title>
        <authorList>
            <person name="Van Sluys M.A."/>
            <person name="de Oliveira M.C."/>
            <person name="Monteiro-Vitorello C.B."/>
            <person name="Miyaki C.Y."/>
            <person name="Furlan L.R."/>
            <person name="Camargo L.E.A."/>
            <person name="da Silva A.C.R."/>
            <person name="Moon D.H."/>
            <person name="Takita M.A."/>
            <person name="Lemos E.G.M."/>
            <person name="Machado M.A."/>
            <person name="Ferro M.I.T."/>
            <person name="da Silva F.R."/>
            <person name="Goldman M.H.S."/>
            <person name="Goldman G.H."/>
            <person name="Lemos M.V.F."/>
            <person name="El-Dorry H."/>
            <person name="Tsai S.M."/>
            <person name="Carrer H."/>
            <person name="Carraro D.M."/>
            <person name="de Oliveira R.C."/>
            <person name="Nunes L.R."/>
            <person name="Siqueira W.J."/>
            <person name="Coutinho L.L."/>
            <person name="Kimura E.T."/>
            <person name="Ferro E.S."/>
            <person name="Harakava R."/>
            <person name="Kuramae E.E."/>
            <person name="Marino C.L."/>
            <person name="Giglioti E."/>
            <person name="Abreu I.L."/>
            <person name="Alves L.M.C."/>
            <person name="do Amaral A.M."/>
            <person name="Baia G.S."/>
            <person name="Blanco S.R."/>
            <person name="Brito M.S."/>
            <person name="Cannavan F.S."/>
            <person name="Celestino A.V."/>
            <person name="da Cunha A.F."/>
            <person name="Fenille R.C."/>
            <person name="Ferro J.A."/>
            <person name="Formighieri E.F."/>
            <person name="Kishi L.T."/>
            <person name="Leoni S.G."/>
            <person name="Oliveira A.R."/>
            <person name="Rosa V.E. Jr."/>
            <person name="Sassaki F.T."/>
            <person name="Sena J.A.D."/>
            <person name="de Souza A.A."/>
            <person name="Truffi D."/>
            <person name="Tsukumo F."/>
            <person name="Yanai G.M."/>
            <person name="Zaros L.G."/>
            <person name="Civerolo E.L."/>
            <person name="Simpson A.J.G."/>
            <person name="Almeida N.F. Jr."/>
            <person name="Setubal J.C."/>
            <person name="Kitajima J.P."/>
        </authorList>
    </citation>
    <scope>NUCLEOTIDE SEQUENCE [LARGE SCALE GENOMIC DNA]</scope>
    <source>
        <strain>Temecula1 / ATCC 700964</strain>
    </source>
</reference>
<organism>
    <name type="scientific">Xylella fastidiosa (strain Temecula1 / ATCC 700964)</name>
    <dbReference type="NCBI Taxonomy" id="183190"/>
    <lineage>
        <taxon>Bacteria</taxon>
        <taxon>Pseudomonadati</taxon>
        <taxon>Pseudomonadota</taxon>
        <taxon>Gammaproteobacteria</taxon>
        <taxon>Lysobacterales</taxon>
        <taxon>Lysobacteraceae</taxon>
        <taxon>Xylella</taxon>
    </lineage>
</organism>
<dbReference type="EMBL" id="AE009442">
    <property type="protein sequence ID" value="AAO28391.1"/>
    <property type="molecule type" value="Genomic_DNA"/>
</dbReference>
<dbReference type="RefSeq" id="WP_011097675.1">
    <property type="nucleotide sequence ID" value="NC_004556.1"/>
</dbReference>
<dbReference type="SMR" id="Q87E11"/>
<dbReference type="MEROPS" id="I39.008"/>
<dbReference type="DNASU" id="1144721"/>
<dbReference type="KEGG" id="xft:PD_0518"/>
<dbReference type="HOGENOM" id="CLU_000965_1_0_6"/>
<dbReference type="Proteomes" id="UP000002516">
    <property type="component" value="Chromosome"/>
</dbReference>
<dbReference type="GO" id="GO:0005886">
    <property type="term" value="C:plasma membrane"/>
    <property type="evidence" value="ECO:0007669"/>
    <property type="project" value="UniProtKB-SubCell"/>
</dbReference>
<dbReference type="GO" id="GO:0004866">
    <property type="term" value="F:endopeptidase inhibitor activity"/>
    <property type="evidence" value="ECO:0007669"/>
    <property type="project" value="InterPro"/>
</dbReference>
<dbReference type="CDD" id="cd02891">
    <property type="entry name" value="A2M_like"/>
    <property type="match status" value="1"/>
</dbReference>
<dbReference type="Gene3D" id="1.50.10.20">
    <property type="match status" value="1"/>
</dbReference>
<dbReference type="Gene3D" id="2.60.40.1930">
    <property type="match status" value="1"/>
</dbReference>
<dbReference type="InterPro" id="IPR049120">
    <property type="entry name" value="A2M_bMG2"/>
</dbReference>
<dbReference type="InterPro" id="IPR011625">
    <property type="entry name" value="A2M_N_BRD"/>
</dbReference>
<dbReference type="InterPro" id="IPR040639">
    <property type="entry name" value="A2MG_MG1"/>
</dbReference>
<dbReference type="InterPro" id="IPR026284">
    <property type="entry name" value="A2MG_proteobact"/>
</dbReference>
<dbReference type="InterPro" id="IPR021868">
    <property type="entry name" value="Alpha_2_Macroglob_MG3"/>
</dbReference>
<dbReference type="InterPro" id="IPR041203">
    <property type="entry name" value="Bact_A2M_MG5"/>
</dbReference>
<dbReference type="InterPro" id="IPR041462">
    <property type="entry name" value="Bact_A2M_MG6"/>
</dbReference>
<dbReference type="InterPro" id="IPR041246">
    <property type="entry name" value="Bact_MG10"/>
</dbReference>
<dbReference type="InterPro" id="IPR001599">
    <property type="entry name" value="Macroglobln_a2"/>
</dbReference>
<dbReference type="InterPro" id="IPR002890">
    <property type="entry name" value="MG2"/>
</dbReference>
<dbReference type="InterPro" id="IPR008930">
    <property type="entry name" value="Terpenoid_cyclase/PrenylTrfase"/>
</dbReference>
<dbReference type="InterPro" id="IPR051802">
    <property type="entry name" value="YfhM-like"/>
</dbReference>
<dbReference type="PANTHER" id="PTHR40094">
    <property type="entry name" value="ALPHA-2-MACROGLOBULIN HOMOLOG"/>
    <property type="match status" value="1"/>
</dbReference>
<dbReference type="PANTHER" id="PTHR40094:SF1">
    <property type="entry name" value="UBIQUITIN DOMAIN-CONTAINING PROTEIN"/>
    <property type="match status" value="1"/>
</dbReference>
<dbReference type="Pfam" id="PF00207">
    <property type="entry name" value="A2M"/>
    <property type="match status" value="1"/>
</dbReference>
<dbReference type="Pfam" id="PF21142">
    <property type="entry name" value="A2M_bMG2"/>
    <property type="match status" value="1"/>
</dbReference>
<dbReference type="Pfam" id="PF07703">
    <property type="entry name" value="A2M_BRD"/>
    <property type="match status" value="1"/>
</dbReference>
<dbReference type="Pfam" id="PF17970">
    <property type="entry name" value="bMG1"/>
    <property type="match status" value="1"/>
</dbReference>
<dbReference type="Pfam" id="PF17973">
    <property type="entry name" value="bMG10"/>
    <property type="match status" value="1"/>
</dbReference>
<dbReference type="Pfam" id="PF11974">
    <property type="entry name" value="bMG3"/>
    <property type="match status" value="1"/>
</dbReference>
<dbReference type="Pfam" id="PF17972">
    <property type="entry name" value="bMG5"/>
    <property type="match status" value="1"/>
</dbReference>
<dbReference type="Pfam" id="PF17962">
    <property type="entry name" value="bMG6"/>
    <property type="match status" value="1"/>
</dbReference>
<dbReference type="Pfam" id="PF01835">
    <property type="entry name" value="MG2"/>
    <property type="match status" value="1"/>
</dbReference>
<dbReference type="PIRSF" id="PIRSF038980">
    <property type="entry name" value="A2M_bac"/>
    <property type="match status" value="1"/>
</dbReference>
<dbReference type="SMART" id="SM01360">
    <property type="entry name" value="A2M"/>
    <property type="match status" value="1"/>
</dbReference>
<dbReference type="SMART" id="SM01359">
    <property type="entry name" value="A2M_N_2"/>
    <property type="match status" value="1"/>
</dbReference>
<dbReference type="SUPFAM" id="SSF48239">
    <property type="entry name" value="Terpenoid cyclases/Protein prenyltransferases"/>
    <property type="match status" value="1"/>
</dbReference>
<dbReference type="PROSITE" id="PS51257">
    <property type="entry name" value="PROKAR_LIPOPROTEIN"/>
    <property type="match status" value="1"/>
</dbReference>
<gene>
    <name type="ordered locus">PD_0518</name>
</gene>
<protein>
    <recommendedName>
        <fullName evidence="1">Alpha-2-macroglobulin</fullName>
    </recommendedName>
</protein>
<name>A2MG_XYLFT</name>
<evidence type="ECO:0000250" key="1">
    <source>
        <dbReference type="UniProtKB" id="P76578"/>
    </source>
</evidence>
<evidence type="ECO:0000255" key="2">
    <source>
        <dbReference type="PROSITE-ProRule" id="PRU00303"/>
    </source>
</evidence>
<evidence type="ECO:0000305" key="3"/>
<proteinExistence type="inferred from homology"/>